<dbReference type="EMBL" id="CP000527">
    <property type="protein sequence ID" value="ABM28576.1"/>
    <property type="molecule type" value="Genomic_DNA"/>
</dbReference>
<dbReference type="RefSeq" id="WP_010938865.1">
    <property type="nucleotide sequence ID" value="NC_008751.1"/>
</dbReference>
<dbReference type="SMR" id="A1VDR0"/>
<dbReference type="KEGG" id="dvl:Dvul_1559"/>
<dbReference type="HOGENOM" id="CLU_075939_2_1_7"/>
<dbReference type="Proteomes" id="UP000009173">
    <property type="component" value="Chromosome"/>
</dbReference>
<dbReference type="GO" id="GO:0022625">
    <property type="term" value="C:cytosolic large ribosomal subunit"/>
    <property type="evidence" value="ECO:0007669"/>
    <property type="project" value="TreeGrafter"/>
</dbReference>
<dbReference type="GO" id="GO:0008097">
    <property type="term" value="F:5S rRNA binding"/>
    <property type="evidence" value="ECO:0007669"/>
    <property type="project" value="InterPro"/>
</dbReference>
<dbReference type="GO" id="GO:0003735">
    <property type="term" value="F:structural constituent of ribosome"/>
    <property type="evidence" value="ECO:0007669"/>
    <property type="project" value="InterPro"/>
</dbReference>
<dbReference type="GO" id="GO:0006412">
    <property type="term" value="P:translation"/>
    <property type="evidence" value="ECO:0007669"/>
    <property type="project" value="UniProtKB-UniRule"/>
</dbReference>
<dbReference type="CDD" id="cd00495">
    <property type="entry name" value="Ribosomal_L25_TL5_CTC"/>
    <property type="match status" value="1"/>
</dbReference>
<dbReference type="Gene3D" id="2.170.120.20">
    <property type="entry name" value="Ribosomal protein L25, beta domain"/>
    <property type="match status" value="1"/>
</dbReference>
<dbReference type="Gene3D" id="2.40.240.10">
    <property type="entry name" value="Ribosomal Protein L25, Chain P"/>
    <property type="match status" value="1"/>
</dbReference>
<dbReference type="HAMAP" id="MF_01334">
    <property type="entry name" value="Ribosomal_bL25_CTC"/>
    <property type="match status" value="1"/>
</dbReference>
<dbReference type="InterPro" id="IPR020056">
    <property type="entry name" value="Rbsml_bL25/Gln-tRNA_synth_N"/>
</dbReference>
<dbReference type="InterPro" id="IPR011035">
    <property type="entry name" value="Ribosomal_bL25/Gln-tRNA_synth"/>
</dbReference>
<dbReference type="InterPro" id="IPR020057">
    <property type="entry name" value="Ribosomal_bL25_b-dom"/>
</dbReference>
<dbReference type="InterPro" id="IPR037121">
    <property type="entry name" value="Ribosomal_bL25_C"/>
</dbReference>
<dbReference type="InterPro" id="IPR001021">
    <property type="entry name" value="Ribosomal_bL25_long"/>
</dbReference>
<dbReference type="InterPro" id="IPR029751">
    <property type="entry name" value="Ribosomal_L25_dom"/>
</dbReference>
<dbReference type="InterPro" id="IPR020930">
    <property type="entry name" value="Ribosomal_uL5_bac-type"/>
</dbReference>
<dbReference type="NCBIfam" id="TIGR00731">
    <property type="entry name" value="bL25_bact_ctc"/>
    <property type="match status" value="1"/>
</dbReference>
<dbReference type="NCBIfam" id="NF004135">
    <property type="entry name" value="PRK05618.3-1"/>
    <property type="match status" value="1"/>
</dbReference>
<dbReference type="PANTHER" id="PTHR33284">
    <property type="entry name" value="RIBOSOMAL PROTEIN L25/GLN-TRNA SYNTHETASE, ANTI-CODON-BINDING DOMAIN-CONTAINING PROTEIN"/>
    <property type="match status" value="1"/>
</dbReference>
<dbReference type="PANTHER" id="PTHR33284:SF1">
    <property type="entry name" value="RIBOSOMAL PROTEIN L25_GLN-TRNA SYNTHETASE, ANTI-CODON-BINDING DOMAIN-CONTAINING PROTEIN"/>
    <property type="match status" value="1"/>
</dbReference>
<dbReference type="Pfam" id="PF01386">
    <property type="entry name" value="Ribosomal_L25p"/>
    <property type="match status" value="1"/>
</dbReference>
<dbReference type="Pfam" id="PF14693">
    <property type="entry name" value="Ribosomal_TL5_C"/>
    <property type="match status" value="1"/>
</dbReference>
<dbReference type="SUPFAM" id="SSF50715">
    <property type="entry name" value="Ribosomal protein L25-like"/>
    <property type="match status" value="1"/>
</dbReference>
<gene>
    <name evidence="1" type="primary">rplY</name>
    <name evidence="1" type="synonym">ctc</name>
    <name type="ordered locus">Dvul_1559</name>
</gene>
<keyword id="KW-0687">Ribonucleoprotein</keyword>
<keyword id="KW-0689">Ribosomal protein</keyword>
<keyword id="KW-0694">RNA-binding</keyword>
<keyword id="KW-0699">rRNA-binding</keyword>
<name>RL25_NITV4</name>
<evidence type="ECO:0000255" key="1">
    <source>
        <dbReference type="HAMAP-Rule" id="MF_01334"/>
    </source>
</evidence>
<evidence type="ECO:0000256" key="2">
    <source>
        <dbReference type="SAM" id="MobiDB-lite"/>
    </source>
</evidence>
<evidence type="ECO:0000305" key="3"/>
<accession>A1VDR0</accession>
<sequence length="190" mass="21543">MSEQKTLSVQKRDNLGKGANRRLRSEEVVPGVFYDTKGNNVAVQMPAKPLQKLFEEVGRTTVFQLEIEEEGKKSTHPVLIWDALFHPYKKKFTHIDFFGVDLDREIKIRVPLEFVGTSRGVKLGGKLEVYREFIDVMSKPLTLPKKITLDLTELDINSTIMLKDVAMPEGVRPATNENFAILSVLTPKSE</sequence>
<proteinExistence type="inferred from homology"/>
<protein>
    <recommendedName>
        <fullName evidence="1">Large ribosomal subunit protein bL25</fullName>
    </recommendedName>
    <alternativeName>
        <fullName evidence="3">50S ribosomal protein L25</fullName>
    </alternativeName>
    <alternativeName>
        <fullName evidence="1">General stress protein CTC</fullName>
    </alternativeName>
</protein>
<feature type="chain" id="PRO_1000052887" description="Large ribosomal subunit protein bL25">
    <location>
        <begin position="1"/>
        <end position="190"/>
    </location>
</feature>
<feature type="region of interest" description="Disordered" evidence="2">
    <location>
        <begin position="1"/>
        <end position="20"/>
    </location>
</feature>
<organism>
    <name type="scientific">Nitratidesulfovibrio vulgaris (strain DP4)</name>
    <name type="common">Desulfovibrio vulgaris</name>
    <dbReference type="NCBI Taxonomy" id="391774"/>
    <lineage>
        <taxon>Bacteria</taxon>
        <taxon>Pseudomonadati</taxon>
        <taxon>Thermodesulfobacteriota</taxon>
        <taxon>Desulfovibrionia</taxon>
        <taxon>Desulfovibrionales</taxon>
        <taxon>Desulfovibrionaceae</taxon>
        <taxon>Nitratidesulfovibrio</taxon>
    </lineage>
</organism>
<comment type="function">
    <text evidence="1">This is one of the proteins that binds to the 5S RNA in the ribosome where it forms part of the central protuberance.</text>
</comment>
<comment type="subunit">
    <text evidence="1">Part of the 50S ribosomal subunit; part of the 5S rRNA/L5/L18/L25 subcomplex. Contacts the 5S rRNA. Binds to the 5S rRNA independently of L5 and L18.</text>
</comment>
<comment type="similarity">
    <text evidence="1">Belongs to the bacterial ribosomal protein bL25 family. CTC subfamily.</text>
</comment>
<reference key="1">
    <citation type="journal article" date="2009" name="Environ. Microbiol.">
        <title>Contribution of mobile genetic elements to Desulfovibrio vulgaris genome plasticity.</title>
        <authorList>
            <person name="Walker C.B."/>
            <person name="Stolyar S."/>
            <person name="Chivian D."/>
            <person name="Pinel N."/>
            <person name="Gabster J.A."/>
            <person name="Dehal P.S."/>
            <person name="He Z."/>
            <person name="Yang Z.K."/>
            <person name="Yen H.C."/>
            <person name="Zhou J."/>
            <person name="Wall J.D."/>
            <person name="Hazen T.C."/>
            <person name="Arkin A.P."/>
            <person name="Stahl D.A."/>
        </authorList>
    </citation>
    <scope>NUCLEOTIDE SEQUENCE [LARGE SCALE GENOMIC DNA]</scope>
    <source>
        <strain>DP4</strain>
    </source>
</reference>